<dbReference type="EMBL" id="CP000931">
    <property type="protein sequence ID" value="ABZ78675.1"/>
    <property type="molecule type" value="Genomic_DNA"/>
</dbReference>
<dbReference type="RefSeq" id="WP_012279182.1">
    <property type="nucleotide sequence ID" value="NC_010334.1"/>
</dbReference>
<dbReference type="SMR" id="B0TM13"/>
<dbReference type="STRING" id="458817.Shal_4135"/>
<dbReference type="KEGG" id="shl:Shal_4135"/>
<dbReference type="eggNOG" id="COG0051">
    <property type="taxonomic scope" value="Bacteria"/>
</dbReference>
<dbReference type="HOGENOM" id="CLU_122625_1_3_6"/>
<dbReference type="OrthoDB" id="9804464at2"/>
<dbReference type="Proteomes" id="UP000001317">
    <property type="component" value="Chromosome"/>
</dbReference>
<dbReference type="GO" id="GO:1990904">
    <property type="term" value="C:ribonucleoprotein complex"/>
    <property type="evidence" value="ECO:0007669"/>
    <property type="project" value="UniProtKB-KW"/>
</dbReference>
<dbReference type="GO" id="GO:0005840">
    <property type="term" value="C:ribosome"/>
    <property type="evidence" value="ECO:0007669"/>
    <property type="project" value="UniProtKB-KW"/>
</dbReference>
<dbReference type="GO" id="GO:0003735">
    <property type="term" value="F:structural constituent of ribosome"/>
    <property type="evidence" value="ECO:0007669"/>
    <property type="project" value="InterPro"/>
</dbReference>
<dbReference type="GO" id="GO:0000049">
    <property type="term" value="F:tRNA binding"/>
    <property type="evidence" value="ECO:0007669"/>
    <property type="project" value="UniProtKB-UniRule"/>
</dbReference>
<dbReference type="GO" id="GO:0006412">
    <property type="term" value="P:translation"/>
    <property type="evidence" value="ECO:0007669"/>
    <property type="project" value="UniProtKB-UniRule"/>
</dbReference>
<dbReference type="FunFam" id="3.30.70.600:FF:000001">
    <property type="entry name" value="30S ribosomal protein S10"/>
    <property type="match status" value="1"/>
</dbReference>
<dbReference type="Gene3D" id="3.30.70.600">
    <property type="entry name" value="Ribosomal protein S10 domain"/>
    <property type="match status" value="1"/>
</dbReference>
<dbReference type="HAMAP" id="MF_00508">
    <property type="entry name" value="Ribosomal_uS10"/>
    <property type="match status" value="1"/>
</dbReference>
<dbReference type="InterPro" id="IPR001848">
    <property type="entry name" value="Ribosomal_uS10"/>
</dbReference>
<dbReference type="InterPro" id="IPR018268">
    <property type="entry name" value="Ribosomal_uS10_CS"/>
</dbReference>
<dbReference type="InterPro" id="IPR027486">
    <property type="entry name" value="Ribosomal_uS10_dom"/>
</dbReference>
<dbReference type="InterPro" id="IPR036838">
    <property type="entry name" value="Ribosomal_uS10_dom_sf"/>
</dbReference>
<dbReference type="NCBIfam" id="NF001861">
    <property type="entry name" value="PRK00596.1"/>
    <property type="match status" value="1"/>
</dbReference>
<dbReference type="NCBIfam" id="TIGR01049">
    <property type="entry name" value="rpsJ_bact"/>
    <property type="match status" value="1"/>
</dbReference>
<dbReference type="PANTHER" id="PTHR11700">
    <property type="entry name" value="30S RIBOSOMAL PROTEIN S10 FAMILY MEMBER"/>
    <property type="match status" value="1"/>
</dbReference>
<dbReference type="Pfam" id="PF00338">
    <property type="entry name" value="Ribosomal_S10"/>
    <property type="match status" value="1"/>
</dbReference>
<dbReference type="PRINTS" id="PR00971">
    <property type="entry name" value="RIBOSOMALS10"/>
</dbReference>
<dbReference type="SMART" id="SM01403">
    <property type="entry name" value="Ribosomal_S10"/>
    <property type="match status" value="1"/>
</dbReference>
<dbReference type="SUPFAM" id="SSF54999">
    <property type="entry name" value="Ribosomal protein S10"/>
    <property type="match status" value="1"/>
</dbReference>
<dbReference type="PROSITE" id="PS00361">
    <property type="entry name" value="RIBOSOMAL_S10"/>
    <property type="match status" value="1"/>
</dbReference>
<gene>
    <name evidence="1" type="primary">rpsJ</name>
    <name type="ordered locus">Shal_4135</name>
</gene>
<evidence type="ECO:0000255" key="1">
    <source>
        <dbReference type="HAMAP-Rule" id="MF_00508"/>
    </source>
</evidence>
<evidence type="ECO:0000305" key="2"/>
<proteinExistence type="inferred from homology"/>
<reference key="1">
    <citation type="submission" date="2008-01" db="EMBL/GenBank/DDBJ databases">
        <title>Complete sequence of Shewanella halifaxensis HAW-EB4.</title>
        <authorList>
            <consortium name="US DOE Joint Genome Institute"/>
            <person name="Copeland A."/>
            <person name="Lucas S."/>
            <person name="Lapidus A."/>
            <person name="Glavina del Rio T."/>
            <person name="Dalin E."/>
            <person name="Tice H."/>
            <person name="Bruce D."/>
            <person name="Goodwin L."/>
            <person name="Pitluck S."/>
            <person name="Sims D."/>
            <person name="Brettin T."/>
            <person name="Detter J.C."/>
            <person name="Han C."/>
            <person name="Kuske C.R."/>
            <person name="Schmutz J."/>
            <person name="Larimer F."/>
            <person name="Land M."/>
            <person name="Hauser L."/>
            <person name="Kyrpides N."/>
            <person name="Kim E."/>
            <person name="Zhao J.-S."/>
            <person name="Richardson P."/>
        </authorList>
    </citation>
    <scope>NUCLEOTIDE SEQUENCE [LARGE SCALE GENOMIC DNA]</scope>
    <source>
        <strain>HAW-EB4</strain>
    </source>
</reference>
<name>RS10_SHEHH</name>
<comment type="function">
    <text evidence="1">Involved in the binding of tRNA to the ribosomes.</text>
</comment>
<comment type="subunit">
    <text evidence="1">Part of the 30S ribosomal subunit.</text>
</comment>
<comment type="similarity">
    <text evidence="1">Belongs to the universal ribosomal protein uS10 family.</text>
</comment>
<organism>
    <name type="scientific">Shewanella halifaxensis (strain HAW-EB4)</name>
    <dbReference type="NCBI Taxonomy" id="458817"/>
    <lineage>
        <taxon>Bacteria</taxon>
        <taxon>Pseudomonadati</taxon>
        <taxon>Pseudomonadota</taxon>
        <taxon>Gammaproteobacteria</taxon>
        <taxon>Alteromonadales</taxon>
        <taxon>Shewanellaceae</taxon>
        <taxon>Shewanella</taxon>
    </lineage>
</organism>
<feature type="chain" id="PRO_1000081569" description="Small ribosomal subunit protein uS10">
    <location>
        <begin position="1"/>
        <end position="103"/>
    </location>
</feature>
<protein>
    <recommendedName>
        <fullName evidence="1">Small ribosomal subunit protein uS10</fullName>
    </recommendedName>
    <alternativeName>
        <fullName evidence="2">30S ribosomal protein S10</fullName>
    </alternativeName>
</protein>
<keyword id="KW-0687">Ribonucleoprotein</keyword>
<keyword id="KW-0689">Ribosomal protein</keyword>
<sequence length="103" mass="11755">MQNQRIRIRLKGFDHRLIDQSTAEIVETAKRTGAQVRGPIPLPTRKERFTILTSPHVNKDARDQYELRTHKRLVDIVEPTEKTVDALMRLDLAAGVDVQISLG</sequence>
<accession>B0TM13</accession>